<sequence>MLPSSIQISGEPLSGAEVRDICRGLRDNAVRLLSLRGCRLCDRDFGRICRALAGATSLAQLNLNLGVVSSPSRIKQLAEALRTNRSIQSLFLHGSPLTDAGLALLNPALALHPALVALDLGDCMLGDEAINLICGLLPPDGAKSGLKELTLSANPGITPKGWSRLAIAVAHSSQVRVLNLDYNPLGDHVAGMLAVAVASSRTLEVLDLEGTGLTNQSAQTLLDMVENYPTALRSLVLAENSISPELQQQICDLLSEGEEEEEVAGGAGDTQEWERGREPAAHQRGSSSWMCPSDPSSQMVLMTSGLGDSLLAETEM</sequence>
<evidence type="ECO:0000256" key="1">
    <source>
        <dbReference type="SAM" id="MobiDB-lite"/>
    </source>
</evidence>
<feature type="chain" id="PRO_0000252159" description="Leucine-rich repeat-containing protein 73">
    <location>
        <begin position="1"/>
        <end position="316"/>
    </location>
</feature>
<feature type="repeat" description="LRR 1">
    <location>
        <begin position="57"/>
        <end position="78"/>
    </location>
</feature>
<feature type="repeat" description="LRR 2">
    <location>
        <begin position="86"/>
        <end position="106"/>
    </location>
</feature>
<feature type="repeat" description="LRR 3">
    <location>
        <begin position="114"/>
        <end position="137"/>
    </location>
</feature>
<feature type="repeat" description="LRR 4">
    <location>
        <begin position="145"/>
        <end position="166"/>
    </location>
</feature>
<feature type="repeat" description="LRR 5">
    <location>
        <begin position="174"/>
        <end position="187"/>
    </location>
</feature>
<feature type="repeat" description="LRR 6">
    <location>
        <begin position="202"/>
        <end position="223"/>
    </location>
</feature>
<feature type="repeat" description="LRR 7">
    <location>
        <begin position="231"/>
        <end position="250"/>
    </location>
</feature>
<feature type="region of interest" description="Disordered" evidence="1">
    <location>
        <begin position="257"/>
        <end position="296"/>
    </location>
</feature>
<feature type="compositionally biased region" description="Basic and acidic residues" evidence="1">
    <location>
        <begin position="272"/>
        <end position="281"/>
    </location>
</feature>
<feature type="compositionally biased region" description="Low complexity" evidence="1">
    <location>
        <begin position="286"/>
        <end position="296"/>
    </location>
</feature>
<dbReference type="EMBL" id="AL355802">
    <property type="status" value="NOT_ANNOTATED_CDS"/>
    <property type="molecule type" value="Genomic_DNA"/>
</dbReference>
<dbReference type="EMBL" id="BC108661">
    <property type="protein sequence ID" value="AAI08662.1"/>
    <property type="molecule type" value="mRNA"/>
</dbReference>
<dbReference type="CCDS" id="CCDS34456.1"/>
<dbReference type="RefSeq" id="NP_001012992.1">
    <property type="nucleotide sequence ID" value="NM_001012974.4"/>
</dbReference>
<dbReference type="RefSeq" id="NP_001258811.1">
    <property type="nucleotide sequence ID" value="NM_001271882.1"/>
</dbReference>
<dbReference type="SMR" id="Q5JTD7"/>
<dbReference type="BioGRID" id="128724">
    <property type="interactions" value="34"/>
</dbReference>
<dbReference type="FunCoup" id="Q5JTD7">
    <property type="interactions" value="55"/>
</dbReference>
<dbReference type="IntAct" id="Q5JTD7">
    <property type="interactions" value="31"/>
</dbReference>
<dbReference type="MINT" id="Q5JTD7"/>
<dbReference type="STRING" id="9606.ENSP00000361518"/>
<dbReference type="iPTMnet" id="Q5JTD7"/>
<dbReference type="PhosphoSitePlus" id="Q5JTD7"/>
<dbReference type="BioMuta" id="LRRC73"/>
<dbReference type="DMDM" id="74742140"/>
<dbReference type="MassIVE" id="Q5JTD7"/>
<dbReference type="PaxDb" id="9606-ENSP00000361518"/>
<dbReference type="PeptideAtlas" id="Q5JTD7"/>
<dbReference type="ProteomicsDB" id="63217"/>
<dbReference type="Antibodypedia" id="46004">
    <property type="antibodies" value="74 antibodies from 14 providers"/>
</dbReference>
<dbReference type="DNASU" id="221424"/>
<dbReference type="Ensembl" id="ENST00000372441.2">
    <property type="protein sequence ID" value="ENSP00000361518.1"/>
    <property type="gene ID" value="ENSG00000204052.5"/>
</dbReference>
<dbReference type="GeneID" id="221424"/>
<dbReference type="KEGG" id="hsa:221424"/>
<dbReference type="MANE-Select" id="ENST00000372441.2">
    <property type="protein sequence ID" value="ENSP00000361518.1"/>
    <property type="RefSeq nucleotide sequence ID" value="NM_001012974.4"/>
    <property type="RefSeq protein sequence ID" value="NP_001012992.1"/>
</dbReference>
<dbReference type="UCSC" id="uc003ovk.3">
    <property type="organism name" value="human"/>
</dbReference>
<dbReference type="AGR" id="HGNC:21375"/>
<dbReference type="CTD" id="221424"/>
<dbReference type="GeneCards" id="LRRC73"/>
<dbReference type="HGNC" id="HGNC:21375">
    <property type="gene designation" value="LRRC73"/>
</dbReference>
<dbReference type="HPA" id="ENSG00000204052">
    <property type="expression patterns" value="Group enriched (brain, testis)"/>
</dbReference>
<dbReference type="neXtProt" id="NX_Q5JTD7"/>
<dbReference type="OpenTargets" id="ENSG00000204052"/>
<dbReference type="PharmGKB" id="PA134973511"/>
<dbReference type="VEuPathDB" id="HostDB:ENSG00000204052"/>
<dbReference type="eggNOG" id="ENOG502QSR8">
    <property type="taxonomic scope" value="Eukaryota"/>
</dbReference>
<dbReference type="GeneTree" id="ENSGT00390000003256"/>
<dbReference type="HOGENOM" id="CLU_079918_0_0_1"/>
<dbReference type="InParanoid" id="Q5JTD7"/>
<dbReference type="OMA" id="NPWICQS"/>
<dbReference type="OrthoDB" id="120976at2759"/>
<dbReference type="PAN-GO" id="Q5JTD7">
    <property type="GO annotations" value="0 GO annotations based on evolutionary models"/>
</dbReference>
<dbReference type="PhylomeDB" id="Q5JTD7"/>
<dbReference type="TreeFam" id="TF328343"/>
<dbReference type="PathwayCommons" id="Q5JTD7"/>
<dbReference type="SignaLink" id="Q5JTD7"/>
<dbReference type="BioGRID-ORCS" id="221424">
    <property type="hits" value="26 hits in 1137 CRISPR screens"/>
</dbReference>
<dbReference type="CD-CODE" id="FB4E32DD">
    <property type="entry name" value="Presynaptic clusters and postsynaptic densities"/>
</dbReference>
<dbReference type="GenomeRNAi" id="221424"/>
<dbReference type="Pharos" id="Q5JTD7">
    <property type="development level" value="Tdark"/>
</dbReference>
<dbReference type="PRO" id="PR:Q5JTD7"/>
<dbReference type="Proteomes" id="UP000005640">
    <property type="component" value="Chromosome 6"/>
</dbReference>
<dbReference type="RNAct" id="Q5JTD7">
    <property type="molecule type" value="protein"/>
</dbReference>
<dbReference type="Bgee" id="ENSG00000204052">
    <property type="expression patterns" value="Expressed in left testis and 112 other cell types or tissues"/>
</dbReference>
<dbReference type="FunFam" id="3.80.10.10:FF:000231">
    <property type="entry name" value="Leucine-rich repeat-containing protein 73 isoform X1"/>
    <property type="match status" value="1"/>
</dbReference>
<dbReference type="FunFam" id="3.80.10.10:FF:000241">
    <property type="entry name" value="leucine-rich repeat-containing protein 73 isoform X1"/>
    <property type="match status" value="1"/>
</dbReference>
<dbReference type="Gene3D" id="3.80.10.10">
    <property type="entry name" value="Ribonuclease Inhibitor"/>
    <property type="match status" value="2"/>
</dbReference>
<dbReference type="InterPro" id="IPR052201">
    <property type="entry name" value="LRR-containing_regulator"/>
</dbReference>
<dbReference type="InterPro" id="IPR032675">
    <property type="entry name" value="LRR_dom_sf"/>
</dbReference>
<dbReference type="PANTHER" id="PTHR24111">
    <property type="entry name" value="LEUCINE-RICH REPEAT-CONTAINING PROTEIN 34"/>
    <property type="match status" value="1"/>
</dbReference>
<dbReference type="PANTHER" id="PTHR24111:SF3">
    <property type="entry name" value="LEUCINE-RICH REPEAT-CONTAINING PROTEIN 73"/>
    <property type="match status" value="1"/>
</dbReference>
<dbReference type="SMART" id="SM00368">
    <property type="entry name" value="LRR_RI"/>
    <property type="match status" value="7"/>
</dbReference>
<dbReference type="SUPFAM" id="SSF52047">
    <property type="entry name" value="RNI-like"/>
    <property type="match status" value="1"/>
</dbReference>
<protein>
    <recommendedName>
        <fullName>Leucine-rich repeat-containing protein 73</fullName>
    </recommendedName>
</protein>
<gene>
    <name type="primary">LRRC73</name>
    <name type="synonym">C6orf154</name>
</gene>
<name>LRC73_HUMAN</name>
<proteinExistence type="evidence at protein level"/>
<accession>Q5JTD7</accession>
<comment type="interaction">
    <interactant intactId="EBI-12003882">
        <id>Q5JTD7</id>
    </interactant>
    <interactant intactId="EBI-12047821">
        <id>Q6UWV6</id>
        <label>ENPP7</label>
    </interactant>
    <organismsDiffer>false</organismsDiffer>
    <experiments>3</experiments>
</comment>
<comment type="interaction">
    <interactant intactId="EBI-12003882">
        <id>Q5JTD7</id>
    </interactant>
    <interactant intactId="EBI-372506">
        <id>Q8TAE8</id>
        <label>GADD45GIP1</label>
    </interactant>
    <organismsDiffer>false</organismsDiffer>
    <experiments>3</experiments>
</comment>
<comment type="interaction">
    <interactant intactId="EBI-12003882">
        <id>Q5JTD7</id>
    </interactant>
    <interactant intactId="EBI-739832">
        <id>Q8TBB1</id>
        <label>LNX1</label>
    </interactant>
    <organismsDiffer>false</organismsDiffer>
    <experiments>3</experiments>
</comment>
<comment type="interaction">
    <interactant intactId="EBI-12003882">
        <id>Q5JTD7</id>
    </interactant>
    <interactant intactId="EBI-741158">
        <id>Q96HA8</id>
        <label>NTAQ1</label>
    </interactant>
    <organismsDiffer>false</organismsDiffer>
    <experiments>3</experiments>
</comment>
<comment type="interaction">
    <interactant intactId="EBI-12003882">
        <id>Q5JTD7</id>
    </interactant>
    <interactant intactId="EBI-79165">
        <id>Q9NRD5</id>
        <label>PICK1</label>
    </interactant>
    <organismsDiffer>false</organismsDiffer>
    <experiments>3</experiments>
</comment>
<comment type="interaction">
    <interactant intactId="EBI-12003882">
        <id>Q5JTD7</id>
    </interactant>
    <interactant intactId="EBI-366570">
        <id>Q9BUL9</id>
        <label>RPP25</label>
    </interactant>
    <organismsDiffer>false</organismsDiffer>
    <experiments>3</experiments>
</comment>
<comment type="interaction">
    <interactant intactId="EBI-12003882">
        <id>Q5JTD7</id>
    </interactant>
    <interactant intactId="EBI-9053916">
        <id>Q63HK5</id>
        <label>TSHZ3</label>
    </interactant>
    <organismsDiffer>false</organismsDiffer>
    <experiments>3</experiments>
</comment>
<comment type="interaction">
    <interactant intactId="EBI-12003882">
        <id>Q5JTD7</id>
    </interactant>
    <interactant intactId="EBI-17189720">
        <id>Q6ZN55-2</id>
        <label>ZNF574</label>
    </interactant>
    <organismsDiffer>false</organismsDiffer>
    <experiments>3</experiments>
</comment>
<keyword id="KW-0433">Leucine-rich repeat</keyword>
<keyword id="KW-1267">Proteomics identification</keyword>
<keyword id="KW-1185">Reference proteome</keyword>
<keyword id="KW-0677">Repeat</keyword>
<reference key="1">
    <citation type="journal article" date="2003" name="Nature">
        <title>The DNA sequence and analysis of human chromosome 6.</title>
        <authorList>
            <person name="Mungall A.J."/>
            <person name="Palmer S.A."/>
            <person name="Sims S.K."/>
            <person name="Edwards C.A."/>
            <person name="Ashurst J.L."/>
            <person name="Wilming L."/>
            <person name="Jones M.C."/>
            <person name="Horton R."/>
            <person name="Hunt S.E."/>
            <person name="Scott C.E."/>
            <person name="Gilbert J.G.R."/>
            <person name="Clamp M.E."/>
            <person name="Bethel G."/>
            <person name="Milne S."/>
            <person name="Ainscough R."/>
            <person name="Almeida J.P."/>
            <person name="Ambrose K.D."/>
            <person name="Andrews T.D."/>
            <person name="Ashwell R.I.S."/>
            <person name="Babbage A.K."/>
            <person name="Bagguley C.L."/>
            <person name="Bailey J."/>
            <person name="Banerjee R."/>
            <person name="Barker D.J."/>
            <person name="Barlow K.F."/>
            <person name="Bates K."/>
            <person name="Beare D.M."/>
            <person name="Beasley H."/>
            <person name="Beasley O."/>
            <person name="Bird C.P."/>
            <person name="Blakey S.E."/>
            <person name="Bray-Allen S."/>
            <person name="Brook J."/>
            <person name="Brown A.J."/>
            <person name="Brown J.Y."/>
            <person name="Burford D.C."/>
            <person name="Burrill W."/>
            <person name="Burton J."/>
            <person name="Carder C."/>
            <person name="Carter N.P."/>
            <person name="Chapman J.C."/>
            <person name="Clark S.Y."/>
            <person name="Clark G."/>
            <person name="Clee C.M."/>
            <person name="Clegg S."/>
            <person name="Cobley V."/>
            <person name="Collier R.E."/>
            <person name="Collins J.E."/>
            <person name="Colman L.K."/>
            <person name="Corby N.R."/>
            <person name="Coville G.J."/>
            <person name="Culley K.M."/>
            <person name="Dhami P."/>
            <person name="Davies J."/>
            <person name="Dunn M."/>
            <person name="Earthrowl M.E."/>
            <person name="Ellington A.E."/>
            <person name="Evans K.A."/>
            <person name="Faulkner L."/>
            <person name="Francis M.D."/>
            <person name="Frankish A."/>
            <person name="Frankland J."/>
            <person name="French L."/>
            <person name="Garner P."/>
            <person name="Garnett J."/>
            <person name="Ghori M.J."/>
            <person name="Gilby L.M."/>
            <person name="Gillson C.J."/>
            <person name="Glithero R.J."/>
            <person name="Grafham D.V."/>
            <person name="Grant M."/>
            <person name="Gribble S."/>
            <person name="Griffiths C."/>
            <person name="Griffiths M.N.D."/>
            <person name="Hall R."/>
            <person name="Halls K.S."/>
            <person name="Hammond S."/>
            <person name="Harley J.L."/>
            <person name="Hart E.A."/>
            <person name="Heath P.D."/>
            <person name="Heathcott R."/>
            <person name="Holmes S.J."/>
            <person name="Howden P.J."/>
            <person name="Howe K.L."/>
            <person name="Howell G.R."/>
            <person name="Huckle E."/>
            <person name="Humphray S.J."/>
            <person name="Humphries M.D."/>
            <person name="Hunt A.R."/>
            <person name="Johnson C.M."/>
            <person name="Joy A.A."/>
            <person name="Kay M."/>
            <person name="Keenan S.J."/>
            <person name="Kimberley A.M."/>
            <person name="King A."/>
            <person name="Laird G.K."/>
            <person name="Langford C."/>
            <person name="Lawlor S."/>
            <person name="Leongamornlert D.A."/>
            <person name="Leversha M."/>
            <person name="Lloyd C.R."/>
            <person name="Lloyd D.M."/>
            <person name="Loveland J.E."/>
            <person name="Lovell J."/>
            <person name="Martin S."/>
            <person name="Mashreghi-Mohammadi M."/>
            <person name="Maslen G.L."/>
            <person name="Matthews L."/>
            <person name="McCann O.T."/>
            <person name="McLaren S.J."/>
            <person name="McLay K."/>
            <person name="McMurray A."/>
            <person name="Moore M.J.F."/>
            <person name="Mullikin J.C."/>
            <person name="Niblett D."/>
            <person name="Nickerson T."/>
            <person name="Novik K.L."/>
            <person name="Oliver K."/>
            <person name="Overton-Larty E.K."/>
            <person name="Parker A."/>
            <person name="Patel R."/>
            <person name="Pearce A.V."/>
            <person name="Peck A.I."/>
            <person name="Phillimore B.J.C.T."/>
            <person name="Phillips S."/>
            <person name="Plumb R.W."/>
            <person name="Porter K.M."/>
            <person name="Ramsey Y."/>
            <person name="Ranby S.A."/>
            <person name="Rice C.M."/>
            <person name="Ross M.T."/>
            <person name="Searle S.M."/>
            <person name="Sehra H.K."/>
            <person name="Sheridan E."/>
            <person name="Skuce C.D."/>
            <person name="Smith S."/>
            <person name="Smith M."/>
            <person name="Spraggon L."/>
            <person name="Squares S.L."/>
            <person name="Steward C.A."/>
            <person name="Sycamore N."/>
            <person name="Tamlyn-Hall G."/>
            <person name="Tester J."/>
            <person name="Theaker A.J."/>
            <person name="Thomas D.W."/>
            <person name="Thorpe A."/>
            <person name="Tracey A."/>
            <person name="Tromans A."/>
            <person name="Tubby B."/>
            <person name="Wall M."/>
            <person name="Wallis J.M."/>
            <person name="West A.P."/>
            <person name="White S.S."/>
            <person name="Whitehead S.L."/>
            <person name="Whittaker H."/>
            <person name="Wild A."/>
            <person name="Willey D.J."/>
            <person name="Wilmer T.E."/>
            <person name="Wood J.M."/>
            <person name="Wray P.W."/>
            <person name="Wyatt J.C."/>
            <person name="Young L."/>
            <person name="Younger R.M."/>
            <person name="Bentley D.R."/>
            <person name="Coulson A."/>
            <person name="Durbin R.M."/>
            <person name="Hubbard T."/>
            <person name="Sulston J.E."/>
            <person name="Dunham I."/>
            <person name="Rogers J."/>
            <person name="Beck S."/>
        </authorList>
    </citation>
    <scope>NUCLEOTIDE SEQUENCE [LARGE SCALE GENOMIC DNA]</scope>
</reference>
<reference key="2">
    <citation type="journal article" date="2004" name="Genome Res.">
        <title>The status, quality, and expansion of the NIH full-length cDNA project: the Mammalian Gene Collection (MGC).</title>
        <authorList>
            <consortium name="The MGC Project Team"/>
        </authorList>
    </citation>
    <scope>NUCLEOTIDE SEQUENCE [LARGE SCALE MRNA]</scope>
    <source>
        <tissue>Brain</tissue>
    </source>
</reference>
<organism>
    <name type="scientific">Homo sapiens</name>
    <name type="common">Human</name>
    <dbReference type="NCBI Taxonomy" id="9606"/>
    <lineage>
        <taxon>Eukaryota</taxon>
        <taxon>Metazoa</taxon>
        <taxon>Chordata</taxon>
        <taxon>Craniata</taxon>
        <taxon>Vertebrata</taxon>
        <taxon>Euteleostomi</taxon>
        <taxon>Mammalia</taxon>
        <taxon>Eutheria</taxon>
        <taxon>Euarchontoglires</taxon>
        <taxon>Primates</taxon>
        <taxon>Haplorrhini</taxon>
        <taxon>Catarrhini</taxon>
        <taxon>Hominidae</taxon>
        <taxon>Homo</taxon>
    </lineage>
</organism>